<protein>
    <recommendedName>
        <fullName evidence="1">UDP-N-acetylglucosamine--N-acetylmuramyl-(pentapeptide) pyrophosphoryl-undecaprenol N-acetylglucosamine transferase</fullName>
        <ecNumber evidence="1">2.4.1.227</ecNumber>
    </recommendedName>
    <alternativeName>
        <fullName evidence="1">Undecaprenyl-PP-MurNAc-pentapeptide-UDPGlcNAc GlcNAc transferase</fullName>
    </alternativeName>
</protein>
<keyword id="KW-0131">Cell cycle</keyword>
<keyword id="KW-0132">Cell division</keyword>
<keyword id="KW-0997">Cell inner membrane</keyword>
<keyword id="KW-1003">Cell membrane</keyword>
<keyword id="KW-0133">Cell shape</keyword>
<keyword id="KW-0961">Cell wall biogenesis/degradation</keyword>
<keyword id="KW-0328">Glycosyltransferase</keyword>
<keyword id="KW-0472">Membrane</keyword>
<keyword id="KW-0573">Peptidoglycan synthesis</keyword>
<keyword id="KW-0808">Transferase</keyword>
<gene>
    <name evidence="1" type="primary">murG</name>
    <name type="ordered locus">SeD_A0137</name>
</gene>
<dbReference type="EC" id="2.4.1.227" evidence="1"/>
<dbReference type="EMBL" id="CP001144">
    <property type="protein sequence ID" value="ACH74055.1"/>
    <property type="molecule type" value="Genomic_DNA"/>
</dbReference>
<dbReference type="RefSeq" id="WP_000016616.1">
    <property type="nucleotide sequence ID" value="NC_011205.1"/>
</dbReference>
<dbReference type="SMR" id="B5FI72"/>
<dbReference type="CAZy" id="GT28">
    <property type="family name" value="Glycosyltransferase Family 28"/>
</dbReference>
<dbReference type="KEGG" id="sed:SeD_A0137"/>
<dbReference type="HOGENOM" id="CLU_037404_2_0_6"/>
<dbReference type="UniPathway" id="UPA00219"/>
<dbReference type="Proteomes" id="UP000008322">
    <property type="component" value="Chromosome"/>
</dbReference>
<dbReference type="GO" id="GO:0005886">
    <property type="term" value="C:plasma membrane"/>
    <property type="evidence" value="ECO:0007669"/>
    <property type="project" value="UniProtKB-SubCell"/>
</dbReference>
<dbReference type="GO" id="GO:0051991">
    <property type="term" value="F:UDP-N-acetyl-D-glucosamine:N-acetylmuramoyl-L-alanyl-D-glutamyl-meso-2,6-diaminopimelyl-D-alanyl-D-alanine-diphosphoundecaprenol 4-beta-N-acetylglucosaminlytransferase activity"/>
    <property type="evidence" value="ECO:0007669"/>
    <property type="project" value="RHEA"/>
</dbReference>
<dbReference type="GO" id="GO:0050511">
    <property type="term" value="F:undecaprenyldiphospho-muramoylpentapeptide beta-N-acetylglucosaminyltransferase activity"/>
    <property type="evidence" value="ECO:0007669"/>
    <property type="project" value="UniProtKB-UniRule"/>
</dbReference>
<dbReference type="GO" id="GO:0005975">
    <property type="term" value="P:carbohydrate metabolic process"/>
    <property type="evidence" value="ECO:0007669"/>
    <property type="project" value="InterPro"/>
</dbReference>
<dbReference type="GO" id="GO:0051301">
    <property type="term" value="P:cell division"/>
    <property type="evidence" value="ECO:0007669"/>
    <property type="project" value="UniProtKB-KW"/>
</dbReference>
<dbReference type="GO" id="GO:0071555">
    <property type="term" value="P:cell wall organization"/>
    <property type="evidence" value="ECO:0007669"/>
    <property type="project" value="UniProtKB-KW"/>
</dbReference>
<dbReference type="GO" id="GO:0030259">
    <property type="term" value="P:lipid glycosylation"/>
    <property type="evidence" value="ECO:0007669"/>
    <property type="project" value="UniProtKB-UniRule"/>
</dbReference>
<dbReference type="GO" id="GO:0009252">
    <property type="term" value="P:peptidoglycan biosynthetic process"/>
    <property type="evidence" value="ECO:0007669"/>
    <property type="project" value="UniProtKB-UniRule"/>
</dbReference>
<dbReference type="GO" id="GO:0008360">
    <property type="term" value="P:regulation of cell shape"/>
    <property type="evidence" value="ECO:0007669"/>
    <property type="project" value="UniProtKB-KW"/>
</dbReference>
<dbReference type="CDD" id="cd03785">
    <property type="entry name" value="GT28_MurG"/>
    <property type="match status" value="1"/>
</dbReference>
<dbReference type="FunFam" id="3.40.50.2000:FF:000016">
    <property type="entry name" value="UDP-N-acetylglucosamine--N-acetylmuramyl-(pentapeptide) pyrophosphoryl-undecaprenol N-acetylglucosamine transferase"/>
    <property type="match status" value="1"/>
</dbReference>
<dbReference type="FunFam" id="3.40.50.2000:FF:000018">
    <property type="entry name" value="UDP-N-acetylglucosamine--N-acetylmuramyl-(pentapeptide) pyrophosphoryl-undecaprenol N-acetylglucosamine transferase"/>
    <property type="match status" value="1"/>
</dbReference>
<dbReference type="Gene3D" id="3.40.50.2000">
    <property type="entry name" value="Glycogen Phosphorylase B"/>
    <property type="match status" value="2"/>
</dbReference>
<dbReference type="HAMAP" id="MF_00033">
    <property type="entry name" value="MurG"/>
    <property type="match status" value="1"/>
</dbReference>
<dbReference type="InterPro" id="IPR006009">
    <property type="entry name" value="GlcNAc_MurG"/>
</dbReference>
<dbReference type="InterPro" id="IPR007235">
    <property type="entry name" value="Glyco_trans_28_C"/>
</dbReference>
<dbReference type="InterPro" id="IPR004276">
    <property type="entry name" value="GlycoTrans_28_N"/>
</dbReference>
<dbReference type="NCBIfam" id="TIGR01133">
    <property type="entry name" value="murG"/>
    <property type="match status" value="1"/>
</dbReference>
<dbReference type="PANTHER" id="PTHR21015:SF22">
    <property type="entry name" value="GLYCOSYLTRANSFERASE"/>
    <property type="match status" value="1"/>
</dbReference>
<dbReference type="PANTHER" id="PTHR21015">
    <property type="entry name" value="UDP-N-ACETYLGLUCOSAMINE--N-ACETYLMURAMYL-(PENTAPEPTIDE) PYROPHOSPHORYL-UNDECAPRENOL N-ACETYLGLUCOSAMINE TRANSFERASE 1"/>
    <property type="match status" value="1"/>
</dbReference>
<dbReference type="Pfam" id="PF04101">
    <property type="entry name" value="Glyco_tran_28_C"/>
    <property type="match status" value="1"/>
</dbReference>
<dbReference type="Pfam" id="PF03033">
    <property type="entry name" value="Glyco_transf_28"/>
    <property type="match status" value="1"/>
</dbReference>
<dbReference type="SUPFAM" id="SSF53756">
    <property type="entry name" value="UDP-Glycosyltransferase/glycogen phosphorylase"/>
    <property type="match status" value="1"/>
</dbReference>
<comment type="function">
    <text evidence="1">Cell wall formation. Catalyzes the transfer of a GlcNAc subunit on undecaprenyl-pyrophosphoryl-MurNAc-pentapeptide (lipid intermediate I) to form undecaprenyl-pyrophosphoryl-MurNAc-(pentapeptide)GlcNAc (lipid intermediate II).</text>
</comment>
<comment type="catalytic activity">
    <reaction evidence="1">
        <text>di-trans,octa-cis-undecaprenyl diphospho-N-acetyl-alpha-D-muramoyl-L-alanyl-D-glutamyl-meso-2,6-diaminopimeloyl-D-alanyl-D-alanine + UDP-N-acetyl-alpha-D-glucosamine = di-trans,octa-cis-undecaprenyl diphospho-[N-acetyl-alpha-D-glucosaminyl-(1-&gt;4)]-N-acetyl-alpha-D-muramoyl-L-alanyl-D-glutamyl-meso-2,6-diaminopimeloyl-D-alanyl-D-alanine + UDP + H(+)</text>
        <dbReference type="Rhea" id="RHEA:31227"/>
        <dbReference type="ChEBI" id="CHEBI:15378"/>
        <dbReference type="ChEBI" id="CHEBI:57705"/>
        <dbReference type="ChEBI" id="CHEBI:58223"/>
        <dbReference type="ChEBI" id="CHEBI:61387"/>
        <dbReference type="ChEBI" id="CHEBI:61388"/>
        <dbReference type="EC" id="2.4.1.227"/>
    </reaction>
</comment>
<comment type="pathway">
    <text evidence="1">Cell wall biogenesis; peptidoglycan biosynthesis.</text>
</comment>
<comment type="subcellular location">
    <subcellularLocation>
        <location evidence="1">Cell inner membrane</location>
        <topology evidence="1">Peripheral membrane protein</topology>
        <orientation evidence="1">Cytoplasmic side</orientation>
    </subcellularLocation>
</comment>
<comment type="similarity">
    <text evidence="1">Belongs to the glycosyltransferase 28 family. MurG subfamily.</text>
</comment>
<organism>
    <name type="scientific">Salmonella dublin (strain CT_02021853)</name>
    <dbReference type="NCBI Taxonomy" id="439851"/>
    <lineage>
        <taxon>Bacteria</taxon>
        <taxon>Pseudomonadati</taxon>
        <taxon>Pseudomonadota</taxon>
        <taxon>Gammaproteobacteria</taxon>
        <taxon>Enterobacterales</taxon>
        <taxon>Enterobacteriaceae</taxon>
        <taxon>Salmonella</taxon>
    </lineage>
</organism>
<proteinExistence type="inferred from homology"/>
<evidence type="ECO:0000255" key="1">
    <source>
        <dbReference type="HAMAP-Rule" id="MF_00033"/>
    </source>
</evidence>
<reference key="1">
    <citation type="journal article" date="2011" name="J. Bacteriol.">
        <title>Comparative genomics of 28 Salmonella enterica isolates: evidence for CRISPR-mediated adaptive sublineage evolution.</title>
        <authorList>
            <person name="Fricke W.F."/>
            <person name="Mammel M.K."/>
            <person name="McDermott P.F."/>
            <person name="Tartera C."/>
            <person name="White D.G."/>
            <person name="Leclerc J.E."/>
            <person name="Ravel J."/>
            <person name="Cebula T.A."/>
        </authorList>
    </citation>
    <scope>NUCLEOTIDE SEQUENCE [LARGE SCALE GENOMIC DNA]</scope>
    <source>
        <strain>CT_02021853</strain>
    </source>
</reference>
<accession>B5FI72</accession>
<feature type="chain" id="PRO_1000090466" description="UDP-N-acetylglucosamine--N-acetylmuramyl-(pentapeptide) pyrophosphoryl-undecaprenol N-acetylglucosamine transferase">
    <location>
        <begin position="1"/>
        <end position="355"/>
    </location>
</feature>
<feature type="binding site" evidence="1">
    <location>
        <begin position="15"/>
        <end position="17"/>
    </location>
    <ligand>
        <name>UDP-N-acetyl-alpha-D-glucosamine</name>
        <dbReference type="ChEBI" id="CHEBI:57705"/>
    </ligand>
</feature>
<feature type="binding site" evidence="1">
    <location>
        <position position="127"/>
    </location>
    <ligand>
        <name>UDP-N-acetyl-alpha-D-glucosamine</name>
        <dbReference type="ChEBI" id="CHEBI:57705"/>
    </ligand>
</feature>
<feature type="binding site" evidence="1">
    <location>
        <position position="163"/>
    </location>
    <ligand>
        <name>UDP-N-acetyl-alpha-D-glucosamine</name>
        <dbReference type="ChEBI" id="CHEBI:57705"/>
    </ligand>
</feature>
<feature type="binding site" evidence="1">
    <location>
        <position position="191"/>
    </location>
    <ligand>
        <name>UDP-N-acetyl-alpha-D-glucosamine</name>
        <dbReference type="ChEBI" id="CHEBI:57705"/>
    </ligand>
</feature>
<feature type="binding site" evidence="1">
    <location>
        <position position="244"/>
    </location>
    <ligand>
        <name>UDP-N-acetyl-alpha-D-glucosamine</name>
        <dbReference type="ChEBI" id="CHEBI:57705"/>
    </ligand>
</feature>
<feature type="binding site" evidence="1">
    <location>
        <begin position="263"/>
        <end position="268"/>
    </location>
    <ligand>
        <name>UDP-N-acetyl-alpha-D-glucosamine</name>
        <dbReference type="ChEBI" id="CHEBI:57705"/>
    </ligand>
</feature>
<feature type="binding site" evidence="1">
    <location>
        <position position="288"/>
    </location>
    <ligand>
        <name>UDP-N-acetyl-alpha-D-glucosamine</name>
        <dbReference type="ChEBI" id="CHEBI:57705"/>
    </ligand>
</feature>
<name>MURG_SALDC</name>
<sequence length="355" mass="37871">MSGQPKRLMVMAGGTGGHVFPGLAVAHHLMAQGWQVRWLGTADRMEADLVPKHGIDIDFIRISGLRGKGVKALLAAPLRIFNAWRQARAIMKRFKPDVVLGMGGYVSGPGGLAAWSLGIPVVLHEQNGIAGLTNQWLAKIATTVMQAFPGAFPNAEVVGNPVRTDVLALPLPQVRLAGRDGPIRVLVVGGSQGARVLNQTMPQVAARLGDTVTIWHQSGKGVQHTVEQAYAGVGQPQHKVTEFIDDMAAAYAWADVVVCRSGALTVSEIAAAGLPAIFVPFQHKDRQQYWNALPLENAGAAKIFEQPQFTVEAVADTLAGWSRGALLTMAERARAVSIPDATERVASEVSRVART</sequence>